<comment type="subunit">
    <text evidence="5">Interacts with ERBB4.</text>
</comment>
<comment type="interaction">
    <interactant intactId="EBI-310697">
        <id>O15042</id>
    </interactant>
    <interactant intactId="EBI-2555370">
        <id>Q8IWX8</id>
        <label>CHERP</label>
    </interactant>
    <organismsDiffer>false</organismsDiffer>
    <experiments>2</experiments>
</comment>
<comment type="interaction">
    <interactant intactId="EBI-310697">
        <id>O15042</id>
    </interactant>
    <interactant intactId="EBI-721525">
        <id>P98175</id>
        <label>RBM10</label>
    </interactant>
    <organismsDiffer>false</organismsDiffer>
    <experiments>2</experiments>
</comment>
<comment type="interaction">
    <interactant intactId="EBI-310697">
        <id>O15042</id>
    </interactant>
    <interactant intactId="EBI-740272">
        <id>Q96I25</id>
        <label>RBM17</label>
    </interactant>
    <organismsDiffer>false</organismsDiffer>
    <experiments>4</experiments>
</comment>
<comment type="interaction">
    <interactant intactId="EBI-310697">
        <id>O15042</id>
    </interactant>
    <interactant intactId="EBI-714003">
        <id>P52756</id>
        <label>RBM5</label>
    </interactant>
    <organismsDiffer>false</organismsDiffer>
    <experiments>2</experiments>
</comment>
<comment type="subcellular location">
    <subcellularLocation>
        <location evidence="5">Nucleus</location>
    </subcellularLocation>
</comment>
<comment type="alternative products">
    <event type="alternative splicing"/>
    <isoform>
        <id>O15042-1</id>
        <name>1</name>
        <sequence type="displayed"/>
    </isoform>
    <isoform>
        <id>O15042-2</id>
        <name>2</name>
        <sequence type="described" ref="VSP_023523"/>
    </isoform>
    <isoform>
        <id>O15042-3</id>
        <name>3</name>
        <sequence type="described" ref="VSP_023522 VSP_023524"/>
    </isoform>
</comment>
<comment type="similarity">
    <text evidence="7">Belongs to the splicing factor SR family.</text>
</comment>
<comment type="sequence caution" evidence="7">
    <conflict type="miscellaneous discrepancy">
        <sequence resource="EMBL-CDS" id="AAH16323"/>
    </conflict>
    <text>Contaminating sequence. Potential poly-A sequence.</text>
</comment>
<comment type="sequence caution" evidence="7">
    <conflict type="miscellaneous discrepancy">
        <sequence resource="EMBL-CDS" id="AAI05605"/>
    </conflict>
    <text>Contaminating sequence. Potential poly-A sequence.</text>
</comment>
<reference key="1">
    <citation type="journal article" date="2006" name="Nature">
        <title>The DNA sequence, annotation and analysis of human chromosome 3.</title>
        <authorList>
            <person name="Muzny D.M."/>
            <person name="Scherer S.E."/>
            <person name="Kaul R."/>
            <person name="Wang J."/>
            <person name="Yu J."/>
            <person name="Sudbrak R."/>
            <person name="Buhay C.J."/>
            <person name="Chen R."/>
            <person name="Cree A."/>
            <person name="Ding Y."/>
            <person name="Dugan-Rocha S."/>
            <person name="Gill R."/>
            <person name="Gunaratne P."/>
            <person name="Harris R.A."/>
            <person name="Hawes A.C."/>
            <person name="Hernandez J."/>
            <person name="Hodgson A.V."/>
            <person name="Hume J."/>
            <person name="Jackson A."/>
            <person name="Khan Z.M."/>
            <person name="Kovar-Smith C."/>
            <person name="Lewis L.R."/>
            <person name="Lozado R.J."/>
            <person name="Metzker M.L."/>
            <person name="Milosavljevic A."/>
            <person name="Miner G.R."/>
            <person name="Morgan M.B."/>
            <person name="Nazareth L.V."/>
            <person name="Scott G."/>
            <person name="Sodergren E."/>
            <person name="Song X.-Z."/>
            <person name="Steffen D."/>
            <person name="Wei S."/>
            <person name="Wheeler D.A."/>
            <person name="Wright M.W."/>
            <person name="Worley K.C."/>
            <person name="Yuan Y."/>
            <person name="Zhang Z."/>
            <person name="Adams C.Q."/>
            <person name="Ansari-Lari M.A."/>
            <person name="Ayele M."/>
            <person name="Brown M.J."/>
            <person name="Chen G."/>
            <person name="Chen Z."/>
            <person name="Clendenning J."/>
            <person name="Clerc-Blankenburg K.P."/>
            <person name="Chen R."/>
            <person name="Chen Z."/>
            <person name="Davis C."/>
            <person name="Delgado O."/>
            <person name="Dinh H.H."/>
            <person name="Dong W."/>
            <person name="Draper H."/>
            <person name="Ernst S."/>
            <person name="Fu G."/>
            <person name="Gonzalez-Garay M.L."/>
            <person name="Garcia D.K."/>
            <person name="Gillett W."/>
            <person name="Gu J."/>
            <person name="Hao B."/>
            <person name="Haugen E."/>
            <person name="Havlak P."/>
            <person name="He X."/>
            <person name="Hennig S."/>
            <person name="Hu S."/>
            <person name="Huang W."/>
            <person name="Jackson L.R."/>
            <person name="Jacob L.S."/>
            <person name="Kelly S.H."/>
            <person name="Kube M."/>
            <person name="Levy R."/>
            <person name="Li Z."/>
            <person name="Liu B."/>
            <person name="Liu J."/>
            <person name="Liu W."/>
            <person name="Lu J."/>
            <person name="Maheshwari M."/>
            <person name="Nguyen B.-V."/>
            <person name="Okwuonu G.O."/>
            <person name="Palmeiri A."/>
            <person name="Pasternak S."/>
            <person name="Perez L.M."/>
            <person name="Phelps K.A."/>
            <person name="Plopper F.J."/>
            <person name="Qiang B."/>
            <person name="Raymond C."/>
            <person name="Rodriguez R."/>
            <person name="Saenphimmachak C."/>
            <person name="Santibanez J."/>
            <person name="Shen H."/>
            <person name="Shen Y."/>
            <person name="Subramanian S."/>
            <person name="Tabor P.E."/>
            <person name="Verduzco D."/>
            <person name="Waldron L."/>
            <person name="Wang J."/>
            <person name="Wang J."/>
            <person name="Wang Q."/>
            <person name="Williams G.A."/>
            <person name="Wong G.K.-S."/>
            <person name="Yao Z."/>
            <person name="Zhang J."/>
            <person name="Zhang X."/>
            <person name="Zhao G."/>
            <person name="Zhou J."/>
            <person name="Zhou Y."/>
            <person name="Nelson D."/>
            <person name="Lehrach H."/>
            <person name="Reinhardt R."/>
            <person name="Naylor S.L."/>
            <person name="Yang H."/>
            <person name="Olson M."/>
            <person name="Weinstock G."/>
            <person name="Gibbs R.A."/>
        </authorList>
    </citation>
    <scope>NUCLEOTIDE SEQUENCE [LARGE SCALE GENOMIC DNA]</scope>
</reference>
<reference key="2">
    <citation type="journal article" date="2004" name="Genome Res.">
        <title>The status, quality, and expansion of the NIH full-length cDNA project: the Mammalian Gene Collection (MGC).</title>
        <authorList>
            <consortium name="The MGC Project Team"/>
        </authorList>
    </citation>
    <scope>NUCLEOTIDE SEQUENCE [LARGE SCALE MRNA] (ISOFORM 3)</scope>
    <scope>NUCLEOTIDE SEQUENCE [LARGE SCALE MRNA] OF 2-1029 (ISOFORM 2)</scope>
    <scope>NUCLEOTIDE SEQUENCE [LARGE SCALE MRNA] OF 1-189 (ISOFORMS 1/2)</scope>
    <source>
        <tissue>Lung</tissue>
        <tissue>Urinary bladder</tissue>
    </source>
</reference>
<reference key="3">
    <citation type="journal article" date="1997" name="DNA Res.">
        <title>Prediction of the coding sequences of unidentified human genes. VII. The complete sequences of 100 new cDNA clones from brain which can code for large proteins in vitro.</title>
        <authorList>
            <person name="Nagase T."/>
            <person name="Ishikawa K."/>
            <person name="Nakajima D."/>
            <person name="Ohira M."/>
            <person name="Seki N."/>
            <person name="Miyajima N."/>
            <person name="Tanaka A."/>
            <person name="Kotani H."/>
            <person name="Nomura N."/>
            <person name="Ohara O."/>
        </authorList>
    </citation>
    <scope>NUCLEOTIDE SEQUENCE [LARGE SCALE MRNA] OF 2-1029 (ISOFORM 1)</scope>
    <source>
        <tissue>Brain</tissue>
    </source>
</reference>
<reference key="4">
    <citation type="journal article" date="2002" name="EMBO J.">
        <title>Characterization of novel SF3b and 17S U2 snRNP proteins, including a human Prp5p homologue and an SF3b DEAD-box protein.</title>
        <authorList>
            <person name="Will C.L."/>
            <person name="Urlaub H."/>
            <person name="Achsel T."/>
            <person name="Gentzel M."/>
            <person name="Wilm M."/>
            <person name="Luehrmann R."/>
        </authorList>
    </citation>
    <scope>IDENTIFICATION (ISOFORM 1)</scope>
    <scope>IDENTIFICATION BY MASS SPECTROMETRY</scope>
</reference>
<reference key="5">
    <citation type="journal article" date="2006" name="Cell">
        <title>Global, in vivo, and site-specific phosphorylation dynamics in signaling networks.</title>
        <authorList>
            <person name="Olsen J.V."/>
            <person name="Blagoev B."/>
            <person name="Gnad F."/>
            <person name="Macek B."/>
            <person name="Kumar C."/>
            <person name="Mortensen P."/>
            <person name="Mann M."/>
        </authorList>
    </citation>
    <scope>PHOSPHORYLATION [LARGE SCALE ANALYSIS] AT SER-811</scope>
    <scope>IDENTIFICATION BY MASS SPECTROMETRY [LARGE SCALE ANALYSIS]</scope>
    <source>
        <tissue>Cervix carcinoma</tissue>
    </source>
</reference>
<reference key="6">
    <citation type="journal article" date="2008" name="Proc. Natl. Acad. Sci. U.S.A.">
        <title>A quantitative atlas of mitotic phosphorylation.</title>
        <authorList>
            <person name="Dephoure N."/>
            <person name="Zhou C."/>
            <person name="Villen J."/>
            <person name="Beausoleil S.A."/>
            <person name="Bakalarski C.E."/>
            <person name="Elledge S.J."/>
            <person name="Gygi S.P."/>
        </authorList>
    </citation>
    <scope>PHOSPHORYLATION [LARGE SCALE ANALYSIS] AT SER-788 AND SER-800</scope>
    <scope>IDENTIFICATION BY MASS SPECTROMETRY [LARGE SCALE ANALYSIS]</scope>
    <source>
        <tissue>Cervix carcinoma</tissue>
    </source>
</reference>
<reference key="7">
    <citation type="journal article" date="2009" name="Sci. Signal.">
        <title>Quantitative phosphoproteomic analysis of T cell receptor signaling reveals system-wide modulation of protein-protein interactions.</title>
        <authorList>
            <person name="Mayya V."/>
            <person name="Lundgren D.H."/>
            <person name="Hwang S.-I."/>
            <person name="Rezaul K."/>
            <person name="Wu L."/>
            <person name="Eng J.K."/>
            <person name="Rodionov V."/>
            <person name="Han D.K."/>
        </authorList>
    </citation>
    <scope>PHOSPHORYLATION [LARGE SCALE ANALYSIS] AT SER-788 AND SER-800</scope>
    <scope>IDENTIFICATION BY MASS SPECTROMETRY [LARGE SCALE ANALYSIS]</scope>
    <source>
        <tissue>Leukemic T-cell</tissue>
    </source>
</reference>
<reference key="8">
    <citation type="journal article" date="2009" name="Science">
        <title>Lysine acetylation targets protein complexes and co-regulates major cellular functions.</title>
        <authorList>
            <person name="Choudhary C."/>
            <person name="Kumar C."/>
            <person name="Gnad F."/>
            <person name="Nielsen M.L."/>
            <person name="Rehman M."/>
            <person name="Walther T.C."/>
            <person name="Olsen J.V."/>
            <person name="Mann M."/>
        </authorList>
    </citation>
    <scope>ACETYLATION [LARGE SCALE ANALYSIS] AT LYS-760</scope>
    <scope>IDENTIFICATION BY MASS SPECTROMETRY [LARGE SCALE ANALYSIS]</scope>
</reference>
<reference key="9">
    <citation type="journal article" date="2010" name="Mol. Cancer Res.">
        <title>Interactions of ErbB4 and Kap1 connect the growth factor and DNA damage response pathways.</title>
        <authorList>
            <person name="Gilmore-Hebert M."/>
            <person name="Ramabhadran R."/>
            <person name="Stern D.F."/>
        </authorList>
    </citation>
    <scope>IDENTIFICATION BY MASS SPECTROMETRY</scope>
    <scope>INTERACTION WITH ERBB4</scope>
    <scope>SUBCELLULAR LOCATION</scope>
</reference>
<reference key="10">
    <citation type="journal article" date="2010" name="Sci. Signal.">
        <title>Quantitative phosphoproteomics reveals widespread full phosphorylation site occupancy during mitosis.</title>
        <authorList>
            <person name="Olsen J.V."/>
            <person name="Vermeulen M."/>
            <person name="Santamaria A."/>
            <person name="Kumar C."/>
            <person name="Miller M.L."/>
            <person name="Jensen L.J."/>
            <person name="Gnad F."/>
            <person name="Cox J."/>
            <person name="Jensen T.S."/>
            <person name="Nigg E.A."/>
            <person name="Brunak S."/>
            <person name="Mann M."/>
        </authorList>
    </citation>
    <scope>PHOSPHORYLATION [LARGE SCALE ANALYSIS] AT SER-485; SER-811; THR-931; SER-946 AND SER-948</scope>
    <scope>IDENTIFICATION BY MASS SPECTROMETRY [LARGE SCALE ANALYSIS]</scope>
    <source>
        <tissue>Cervix carcinoma</tissue>
    </source>
</reference>
<reference key="11">
    <citation type="journal article" date="2011" name="BMC Syst. Biol.">
        <title>Initial characterization of the human central proteome.</title>
        <authorList>
            <person name="Burkard T.R."/>
            <person name="Planyavsky M."/>
            <person name="Kaupe I."/>
            <person name="Breitwieser F.P."/>
            <person name="Buerckstuemmer T."/>
            <person name="Bennett K.L."/>
            <person name="Superti-Furga G."/>
            <person name="Colinge J."/>
        </authorList>
    </citation>
    <scope>IDENTIFICATION BY MASS SPECTROMETRY [LARGE SCALE ANALYSIS]</scope>
</reference>
<reference key="12">
    <citation type="journal article" date="2011" name="Sci. Signal.">
        <title>System-wide temporal characterization of the proteome and phosphoproteome of human embryonic stem cell differentiation.</title>
        <authorList>
            <person name="Rigbolt K.T."/>
            <person name="Prokhorova T.A."/>
            <person name="Akimov V."/>
            <person name="Henningsen J."/>
            <person name="Johansen P.T."/>
            <person name="Kratchmarova I."/>
            <person name="Kassem M."/>
            <person name="Mann M."/>
            <person name="Olsen J.V."/>
            <person name="Blagoev B."/>
        </authorList>
    </citation>
    <scope>PHOSPHORYLATION [LARGE SCALE ANALYSIS] AT SER-202; SER-485; SER-788 AND SER-811</scope>
    <scope>IDENTIFICATION BY MASS SPECTROMETRY [LARGE SCALE ANALYSIS]</scope>
</reference>
<reference key="13">
    <citation type="journal article" date="2012" name="Proc. Natl. Acad. Sci. U.S.A.">
        <title>N-terminal acetylome analyses and functional insights of the N-terminal acetyltransferase NatB.</title>
        <authorList>
            <person name="Van Damme P."/>
            <person name="Lasa M."/>
            <person name="Polevoda B."/>
            <person name="Gazquez C."/>
            <person name="Elosegui-Artola A."/>
            <person name="Kim D.S."/>
            <person name="De Juan-Pardo E."/>
            <person name="Demeyer K."/>
            <person name="Hole K."/>
            <person name="Larrea E."/>
            <person name="Timmerman E."/>
            <person name="Prieto J."/>
            <person name="Arnesen T."/>
            <person name="Sherman F."/>
            <person name="Gevaert K."/>
            <person name="Aldabe R."/>
        </authorList>
    </citation>
    <scope>ACETYLATION [LARGE SCALE ANALYSIS] AT ALA-2</scope>
    <scope>CLEAVAGE OF INITIATOR METHIONINE [LARGE SCALE ANALYSIS]</scope>
    <scope>IDENTIFICATION BY MASS SPECTROMETRY [LARGE SCALE ANALYSIS]</scope>
</reference>
<reference key="14">
    <citation type="journal article" date="2013" name="J. Proteome Res.">
        <title>Toward a comprehensive characterization of a human cancer cell phosphoproteome.</title>
        <authorList>
            <person name="Zhou H."/>
            <person name="Di Palma S."/>
            <person name="Preisinger C."/>
            <person name="Peng M."/>
            <person name="Polat A.N."/>
            <person name="Heck A.J."/>
            <person name="Mohammed S."/>
        </authorList>
    </citation>
    <scope>PHOSPHORYLATION [LARGE SCALE ANALYSIS] AT SER-67; SER-202; SER-236 AND SER-485</scope>
    <scope>IDENTIFICATION BY MASS SPECTROMETRY [LARGE SCALE ANALYSIS]</scope>
    <source>
        <tissue>Cervix carcinoma</tissue>
        <tissue>Erythroleukemia</tissue>
    </source>
</reference>
<reference key="15">
    <citation type="journal article" date="2014" name="J. Proteomics">
        <title>An enzyme assisted RP-RPLC approach for in-depth analysis of human liver phosphoproteome.</title>
        <authorList>
            <person name="Bian Y."/>
            <person name="Song C."/>
            <person name="Cheng K."/>
            <person name="Dong M."/>
            <person name="Wang F."/>
            <person name="Huang J."/>
            <person name="Sun D."/>
            <person name="Wang L."/>
            <person name="Ye M."/>
            <person name="Zou H."/>
        </authorList>
    </citation>
    <scope>PHOSPHORYLATION [LARGE SCALE ANALYSIS] AT SER-67 AND THR-719</scope>
    <scope>IDENTIFICATION BY MASS SPECTROMETRY [LARGE SCALE ANALYSIS]</scope>
    <source>
        <tissue>Liver</tissue>
    </source>
</reference>
<reference key="16">
    <citation type="journal article" date="2014" name="Nat. Struct. Mol. Biol.">
        <title>Uncovering global SUMOylation signaling networks in a site-specific manner.</title>
        <authorList>
            <person name="Hendriks I.A."/>
            <person name="D'Souza R.C."/>
            <person name="Yang B."/>
            <person name="Verlaan-de Vries M."/>
            <person name="Mann M."/>
            <person name="Vertegaal A.C."/>
        </authorList>
    </citation>
    <scope>SUMOYLATION [LARGE SCALE ANALYSIS] AT LYS-760</scope>
    <scope>IDENTIFICATION BY MASS SPECTROMETRY [LARGE SCALE ANALYSIS]</scope>
</reference>
<reference key="17">
    <citation type="journal article" date="2015" name="Mol. Cell. Proteomics">
        <title>System-wide analysis of SUMOylation dynamics in response to replication stress reveals novel small ubiquitin-like modified target proteins and acceptor lysines relevant for genome stability.</title>
        <authorList>
            <person name="Xiao Z."/>
            <person name="Chang J.G."/>
            <person name="Hendriks I.A."/>
            <person name="Sigurdsson J.O."/>
            <person name="Olsen J.V."/>
            <person name="Vertegaal A.C."/>
        </authorList>
    </citation>
    <scope>SUMOYLATION [LARGE SCALE ANALYSIS] AT LYS-208</scope>
    <scope>IDENTIFICATION BY MASS SPECTROMETRY [LARGE SCALE ANALYSIS]</scope>
</reference>
<reference key="18">
    <citation type="journal article" date="2017" name="Nat. Struct. Mol. Biol.">
        <title>Site-specific mapping of the human SUMO proteome reveals co-modification with phosphorylation.</title>
        <authorList>
            <person name="Hendriks I.A."/>
            <person name="Lyon D."/>
            <person name="Young C."/>
            <person name="Jensen L.J."/>
            <person name="Vertegaal A.C."/>
            <person name="Nielsen M.L."/>
        </authorList>
    </citation>
    <scope>SUMOYLATION [LARGE SCALE ANALYSIS] AT LYS-80; LYS-145; LYS-168; LYS-208; LYS-748; LYS-749; LYS-760; LYS-822; LYS-829 AND LYS-832</scope>
    <scope>IDENTIFICATION BY MASS SPECTROMETRY [LARGE SCALE ANALYSIS]</scope>
</reference>
<keyword id="KW-0007">Acetylation</keyword>
<keyword id="KW-0025">Alternative splicing</keyword>
<keyword id="KW-0175">Coiled coil</keyword>
<keyword id="KW-1017">Isopeptide bond</keyword>
<keyword id="KW-0539">Nucleus</keyword>
<keyword id="KW-0597">Phosphoprotein</keyword>
<keyword id="KW-1267">Proteomics identification</keyword>
<keyword id="KW-1185">Reference proteome</keyword>
<keyword id="KW-0694">RNA-binding</keyword>
<keyword id="KW-0832">Ubl conjugation</keyword>
<evidence type="ECO:0000255" key="1"/>
<evidence type="ECO:0000255" key="2">
    <source>
        <dbReference type="PROSITE-ProRule" id="PRU00176"/>
    </source>
</evidence>
<evidence type="ECO:0000255" key="3">
    <source>
        <dbReference type="PROSITE-ProRule" id="PRU00724"/>
    </source>
</evidence>
<evidence type="ECO:0000256" key="4">
    <source>
        <dbReference type="SAM" id="MobiDB-lite"/>
    </source>
</evidence>
<evidence type="ECO:0000269" key="5">
    <source>
    </source>
</evidence>
<evidence type="ECO:0000303" key="6">
    <source>
    </source>
</evidence>
<evidence type="ECO:0000305" key="7"/>
<evidence type="ECO:0007744" key="8">
    <source>
    </source>
</evidence>
<evidence type="ECO:0007744" key="9">
    <source>
    </source>
</evidence>
<evidence type="ECO:0007744" key="10">
    <source>
    </source>
</evidence>
<evidence type="ECO:0007744" key="11">
    <source>
    </source>
</evidence>
<evidence type="ECO:0007744" key="12">
    <source>
    </source>
</evidence>
<evidence type="ECO:0007744" key="13">
    <source>
    </source>
</evidence>
<evidence type="ECO:0007744" key="14">
    <source>
    </source>
</evidence>
<evidence type="ECO:0007744" key="15">
    <source>
    </source>
</evidence>
<evidence type="ECO:0007744" key="16">
    <source>
    </source>
</evidence>
<evidence type="ECO:0007744" key="17">
    <source>
    </source>
</evidence>
<evidence type="ECO:0007744" key="18">
    <source>
    </source>
</evidence>
<evidence type="ECO:0007744" key="19">
    <source>
    </source>
</evidence>
<dbReference type="EMBL" id="AC018450">
    <property type="status" value="NOT_ANNOTATED_CDS"/>
    <property type="molecule type" value="Genomic_DNA"/>
</dbReference>
<dbReference type="EMBL" id="AC026304">
    <property type="status" value="NOT_ANNOTATED_CDS"/>
    <property type="molecule type" value="Genomic_DNA"/>
</dbReference>
<dbReference type="EMBL" id="BC006474">
    <property type="protein sequence ID" value="AAH06474.1"/>
    <property type="molecule type" value="mRNA"/>
</dbReference>
<dbReference type="EMBL" id="BC016323">
    <property type="protein sequence ID" value="AAH16323.1"/>
    <property type="status" value="ALT_SEQ"/>
    <property type="molecule type" value="mRNA"/>
</dbReference>
<dbReference type="EMBL" id="BC105604">
    <property type="protein sequence ID" value="AAI05605.1"/>
    <property type="status" value="ALT_SEQ"/>
    <property type="molecule type" value="mRNA"/>
</dbReference>
<dbReference type="EMBL" id="BC111692">
    <property type="protein sequence ID" value="AAI11693.1"/>
    <property type="molecule type" value="mRNA"/>
</dbReference>
<dbReference type="EMBL" id="AB002330">
    <property type="protein sequence ID" value="BAA20790.1"/>
    <property type="molecule type" value="mRNA"/>
</dbReference>
<dbReference type="EMBL" id="BK000564">
    <property type="protein sequence ID" value="DAA00075.1"/>
    <property type="molecule type" value="mRNA"/>
</dbReference>
<dbReference type="CCDS" id="CCDS46928.1">
    <molecule id="O15042-1"/>
</dbReference>
<dbReference type="RefSeq" id="NP_001073884.1">
    <molecule id="O15042-1"/>
    <property type="nucleotide sequence ID" value="NM_001080415.2"/>
</dbReference>
<dbReference type="RefSeq" id="NP_001307148.1">
    <molecule id="O15042-2"/>
    <property type="nucleotide sequence ID" value="NM_001320219.2"/>
</dbReference>
<dbReference type="RefSeq" id="NP_001307149.1">
    <molecule id="O15042-3"/>
    <property type="nucleotide sequence ID" value="NM_001320220.2"/>
</dbReference>
<dbReference type="RefSeq" id="NP_001307151.1">
    <property type="nucleotide sequence ID" value="NM_001320222.1"/>
</dbReference>
<dbReference type="RefSeq" id="XP_016861527.1">
    <property type="nucleotide sequence ID" value="XM_017006038.1"/>
</dbReference>
<dbReference type="RefSeq" id="XP_016861528.1">
    <property type="nucleotide sequence ID" value="XM_017006039.1"/>
</dbReference>
<dbReference type="SMR" id="O15042"/>
<dbReference type="BioGRID" id="116932">
    <property type="interactions" value="373"/>
</dbReference>
<dbReference type="CORUM" id="O15042"/>
<dbReference type="FunCoup" id="O15042">
    <property type="interactions" value="4894"/>
</dbReference>
<dbReference type="IntAct" id="O15042">
    <property type="interactions" value="168"/>
</dbReference>
<dbReference type="MINT" id="O15042"/>
<dbReference type="STRING" id="9606.ENSP00000418563"/>
<dbReference type="GlyGen" id="O15042">
    <property type="glycosylation" value="3 sites, 2 N-linked glycans (2 sites), 1 O-linked glycan (1 site)"/>
</dbReference>
<dbReference type="iPTMnet" id="O15042"/>
<dbReference type="MetOSite" id="O15042"/>
<dbReference type="PhosphoSitePlus" id="O15042"/>
<dbReference type="SwissPalm" id="O15042"/>
<dbReference type="BioMuta" id="U2SURP"/>
<dbReference type="jPOST" id="O15042"/>
<dbReference type="MassIVE" id="O15042"/>
<dbReference type="PaxDb" id="9606-ENSP00000418563"/>
<dbReference type="PeptideAtlas" id="O15042"/>
<dbReference type="ProteomicsDB" id="48397">
    <molecule id="O15042-1"/>
</dbReference>
<dbReference type="ProteomicsDB" id="48398">
    <molecule id="O15042-2"/>
</dbReference>
<dbReference type="ProteomicsDB" id="48399">
    <molecule id="O15042-3"/>
</dbReference>
<dbReference type="Pumba" id="O15042"/>
<dbReference type="Antibodypedia" id="48172">
    <property type="antibodies" value="138 antibodies from 23 providers"/>
</dbReference>
<dbReference type="DNASU" id="23350"/>
<dbReference type="Ensembl" id="ENST00000473835.7">
    <molecule id="O15042-1"/>
    <property type="protein sequence ID" value="ENSP00000418563.1"/>
    <property type="gene ID" value="ENSG00000163714.18"/>
</dbReference>
<dbReference type="GeneID" id="23350"/>
<dbReference type="KEGG" id="hsa:23350"/>
<dbReference type="MANE-Select" id="ENST00000473835.7">
    <property type="protein sequence ID" value="ENSP00000418563.1"/>
    <property type="RefSeq nucleotide sequence ID" value="NM_001080415.2"/>
    <property type="RefSeq protein sequence ID" value="NP_001073884.1"/>
</dbReference>
<dbReference type="UCSC" id="uc003evh.2">
    <molecule id="O15042-1"/>
    <property type="organism name" value="human"/>
</dbReference>
<dbReference type="AGR" id="HGNC:30855"/>
<dbReference type="CTD" id="23350"/>
<dbReference type="DisGeNET" id="23350"/>
<dbReference type="GeneCards" id="U2SURP"/>
<dbReference type="HGNC" id="HGNC:30855">
    <property type="gene designation" value="U2SURP"/>
</dbReference>
<dbReference type="HPA" id="ENSG00000163714">
    <property type="expression patterns" value="Low tissue specificity"/>
</dbReference>
<dbReference type="MIM" id="617849">
    <property type="type" value="gene"/>
</dbReference>
<dbReference type="neXtProt" id="NX_O15042"/>
<dbReference type="OpenTargets" id="ENSG00000163714"/>
<dbReference type="VEuPathDB" id="HostDB:ENSG00000163714"/>
<dbReference type="eggNOG" id="KOG0151">
    <property type="taxonomic scope" value="Eukaryota"/>
</dbReference>
<dbReference type="GeneTree" id="ENSGT00390000010687"/>
<dbReference type="HOGENOM" id="CLU_010743_1_0_1"/>
<dbReference type="InParanoid" id="O15042"/>
<dbReference type="OMA" id="FKSRVCN"/>
<dbReference type="OrthoDB" id="377209at2759"/>
<dbReference type="PAN-GO" id="O15042">
    <property type="GO annotations" value="2 GO annotations based on evolutionary models"/>
</dbReference>
<dbReference type="PhylomeDB" id="O15042"/>
<dbReference type="TreeFam" id="TF318729"/>
<dbReference type="PathwayCommons" id="O15042"/>
<dbReference type="Reactome" id="R-HSA-72163">
    <property type="pathway name" value="mRNA Splicing - Major Pathway"/>
</dbReference>
<dbReference type="SignaLink" id="O15042"/>
<dbReference type="BioGRID-ORCS" id="23350">
    <property type="hits" value="767 hits in 1157 CRISPR screens"/>
</dbReference>
<dbReference type="CD-CODE" id="804901D1">
    <property type="entry name" value="Nuclear speckle"/>
</dbReference>
<dbReference type="ChiTaRS" id="U2SURP">
    <property type="organism name" value="human"/>
</dbReference>
<dbReference type="GenomeRNAi" id="23350"/>
<dbReference type="Pharos" id="O15042">
    <property type="development level" value="Tbio"/>
</dbReference>
<dbReference type="PRO" id="PR:O15042"/>
<dbReference type="Proteomes" id="UP000005640">
    <property type="component" value="Chromosome 3"/>
</dbReference>
<dbReference type="RNAct" id="O15042">
    <property type="molecule type" value="protein"/>
</dbReference>
<dbReference type="Bgee" id="ENSG00000163714">
    <property type="expression patterns" value="Expressed in calcaneal tendon and 210 other cell types or tissues"/>
</dbReference>
<dbReference type="ExpressionAtlas" id="O15042">
    <property type="expression patterns" value="baseline and differential"/>
</dbReference>
<dbReference type="GO" id="GO:0005654">
    <property type="term" value="C:nucleoplasm"/>
    <property type="evidence" value="ECO:0000314"/>
    <property type="project" value="HPA"/>
</dbReference>
<dbReference type="GO" id="GO:0005634">
    <property type="term" value="C:nucleus"/>
    <property type="evidence" value="ECO:0000314"/>
    <property type="project" value="UniProtKB"/>
</dbReference>
<dbReference type="GO" id="GO:0005686">
    <property type="term" value="C:U2 snRNP"/>
    <property type="evidence" value="ECO:0007669"/>
    <property type="project" value="Ensembl"/>
</dbReference>
<dbReference type="GO" id="GO:0003723">
    <property type="term" value="F:RNA binding"/>
    <property type="evidence" value="ECO:0007005"/>
    <property type="project" value="UniProtKB"/>
</dbReference>
<dbReference type="GO" id="GO:0006396">
    <property type="term" value="P:RNA processing"/>
    <property type="evidence" value="ECO:0007669"/>
    <property type="project" value="InterPro"/>
</dbReference>
<dbReference type="CDD" id="cd21370">
    <property type="entry name" value="cwf21_SR140"/>
    <property type="match status" value="1"/>
</dbReference>
<dbReference type="CDD" id="cd12223">
    <property type="entry name" value="RRM_SR140"/>
    <property type="match status" value="1"/>
</dbReference>
<dbReference type="FunFam" id="1.10.10.790:FF:000006">
    <property type="entry name" value="U2 snRNP-associated SURP motif-containing protein isoform X1"/>
    <property type="match status" value="1"/>
</dbReference>
<dbReference type="FunFam" id="1.25.40.90:FF:000013">
    <property type="entry name" value="U2 snRNP-associated SURP motif-containing protein isoform X1"/>
    <property type="match status" value="1"/>
</dbReference>
<dbReference type="FunFam" id="3.30.70.330:FF:000177">
    <property type="entry name" value="U2 snRNP-associated SURP motif-containing protein-like isoform X2"/>
    <property type="match status" value="1"/>
</dbReference>
<dbReference type="Gene3D" id="1.25.40.90">
    <property type="match status" value="1"/>
</dbReference>
<dbReference type="Gene3D" id="3.30.70.330">
    <property type="match status" value="1"/>
</dbReference>
<dbReference type="Gene3D" id="6.10.140.420">
    <property type="match status" value="1"/>
</dbReference>
<dbReference type="Gene3D" id="1.10.10.790">
    <property type="entry name" value="Surp module"/>
    <property type="match status" value="1"/>
</dbReference>
<dbReference type="InterPro" id="IPR006569">
    <property type="entry name" value="CID_dom"/>
</dbReference>
<dbReference type="InterPro" id="IPR008942">
    <property type="entry name" value="ENTH_VHS"/>
</dbReference>
<dbReference type="InterPro" id="IPR013170">
    <property type="entry name" value="mRNA_splic_Cwf21_dom"/>
</dbReference>
<dbReference type="InterPro" id="IPR012677">
    <property type="entry name" value="Nucleotide-bd_a/b_plait_sf"/>
</dbReference>
<dbReference type="InterPro" id="IPR035979">
    <property type="entry name" value="RBD_domain_sf"/>
</dbReference>
<dbReference type="InterPro" id="IPR000504">
    <property type="entry name" value="RRM_dom"/>
</dbReference>
<dbReference type="InterPro" id="IPR051485">
    <property type="entry name" value="SR-CTD_assoc_factor"/>
</dbReference>
<dbReference type="InterPro" id="IPR047488">
    <property type="entry name" value="SR140_cwf21"/>
</dbReference>
<dbReference type="InterPro" id="IPR035009">
    <property type="entry name" value="SR140_RRM"/>
</dbReference>
<dbReference type="InterPro" id="IPR000061">
    <property type="entry name" value="Surp"/>
</dbReference>
<dbReference type="InterPro" id="IPR035967">
    <property type="entry name" value="SWAP/Surp_sf"/>
</dbReference>
<dbReference type="PANTHER" id="PTHR23140">
    <property type="entry name" value="RNA PROCESSING PROTEIN LD23810P"/>
    <property type="match status" value="1"/>
</dbReference>
<dbReference type="PANTHER" id="PTHR23140:SF0">
    <property type="entry name" value="U2 SNRNP-ASSOCIATED SURP MOTIF-CONTAINING PROTEIN"/>
    <property type="match status" value="1"/>
</dbReference>
<dbReference type="Pfam" id="PF04818">
    <property type="entry name" value="CID"/>
    <property type="match status" value="1"/>
</dbReference>
<dbReference type="Pfam" id="PF08312">
    <property type="entry name" value="cwf21"/>
    <property type="match status" value="1"/>
</dbReference>
<dbReference type="Pfam" id="PF00076">
    <property type="entry name" value="RRM_1"/>
    <property type="match status" value="1"/>
</dbReference>
<dbReference type="Pfam" id="PF01805">
    <property type="entry name" value="Surp"/>
    <property type="match status" value="1"/>
</dbReference>
<dbReference type="SMART" id="SM01115">
    <property type="entry name" value="cwf21"/>
    <property type="match status" value="1"/>
</dbReference>
<dbReference type="SMART" id="SM00582">
    <property type="entry name" value="RPR"/>
    <property type="match status" value="1"/>
</dbReference>
<dbReference type="SMART" id="SM00360">
    <property type="entry name" value="RRM"/>
    <property type="match status" value="1"/>
</dbReference>
<dbReference type="SMART" id="SM00648">
    <property type="entry name" value="SWAP"/>
    <property type="match status" value="1"/>
</dbReference>
<dbReference type="SUPFAM" id="SSF48464">
    <property type="entry name" value="ENTH/VHS domain"/>
    <property type="match status" value="1"/>
</dbReference>
<dbReference type="SUPFAM" id="SSF54928">
    <property type="entry name" value="RNA-binding domain, RBD"/>
    <property type="match status" value="1"/>
</dbReference>
<dbReference type="SUPFAM" id="SSF109905">
    <property type="entry name" value="Surp module (SWAP domain)"/>
    <property type="match status" value="1"/>
</dbReference>
<dbReference type="PROSITE" id="PS51391">
    <property type="entry name" value="CID"/>
    <property type="match status" value="1"/>
</dbReference>
<dbReference type="PROSITE" id="PS50102">
    <property type="entry name" value="RRM"/>
    <property type="match status" value="1"/>
</dbReference>
<dbReference type="PROSITE" id="PS50128">
    <property type="entry name" value="SURP"/>
    <property type="match status" value="1"/>
</dbReference>
<accession>O15042</accession>
<accession>A0PJ60</accession>
<accession>Q0D2M1</accession>
<accession>Q2NKQ7</accession>
<accession>Q9BR70</accession>
<protein>
    <recommendedName>
        <fullName>U2 snRNP-associated SURP motif-containing protein</fullName>
    </recommendedName>
    <alternativeName>
        <fullName>140 kDa Ser/Arg-rich domain protein</fullName>
    </alternativeName>
    <alternativeName>
        <fullName>U2-associated protein SR140</fullName>
    </alternativeName>
</protein>
<gene>
    <name type="primary">U2SURP</name>
    <name type="synonym">KIAA0332</name>
    <name type="synonym">SR140</name>
</gene>
<name>SR140_HUMAN</name>
<sequence>MADKTPGGSQKASSKTRSSDVHSSGSSDAHMDASGPSDSDMPSRTRPKSPRKHNYRNESARESLCDSPHQNLSRPLLENKLKAFSIGKMSTAKRTLSKKEQEELKKKEDEKAAAEIYEEFLAAFEGSDGNKVKTFVRGGVVNAAKEEHETDEKRGKIYKPSSRFADQKNPPNQSSNERPPSLLVIETKKPPLKKGEKEKKKSNLELFKEELKQIQEERDERHKTKGRLSRFEPPQSDSDGQRRSMDAPSRRNRSSGVLDDYAPGSHDVGDPSTTNLYLGNINPQMNEEMLCQEFGRFGPLASVKIMWPRTDEERARERNCGFVAFMNRRDAERALKNLNGKMIMSFEMKLGWGKAVPIPPHPIYIPPSMMEHTLPPPPSGLPFNAQPRERLKNPNAPMLPPPKNKEDFEKTLSQAIVKVVIPTERNLLALIHRMIEFVVREGPMFEAMIMNREINNPMFRFLFENQTPAHVYYRWKLYSILQGDSPTKWRTEDFRMFKNGSFWRPPPLNPYLHGMSEEQETEAFVEEPSKKGALKEEQRDKLEEILRGLTPRKNDIGDAMVFCLNNAEAAEEIVDCITESLSILKTPLPKKIARLYLVSDVLYNSSAKVANASYYRKFFETKLCQIFSDLNATYRTIQGHLQSENFKQRVMTCFRAWEDWAIYPEPFLIKLQNIFLGLVNIIEEKETEDVPDDLDGAPIEEELDGAPLEDVDGIPIDATPIDDLDGVPIKSLDDDLDGVPLDATEDSKKNEPIFKVAPSKWEAVDESELEAQAVTTSKWELFDQHEESEEEENQNQEEESEDEEDTQSSKSEEHHLYSNPIKEEMTESKFSKYSEMSEEKRAKLREIELKVMKFQDELESGKRPKKPGQSFQEQVEHYRDKLLQREKEKELERERERDKKDKEKLESRSKDKKEKDECTPTRKERKRRHSTSPSPSRSSSGRRVKSPSPKSERSERSERSHKESSRSRSSHKDSPRDVSKKAKRSPSGSRTPKRSRRSRSRSPKKSGKKSRSQSRSPHRSHKKSKKNKH</sequence>
<organism>
    <name type="scientific">Homo sapiens</name>
    <name type="common">Human</name>
    <dbReference type="NCBI Taxonomy" id="9606"/>
    <lineage>
        <taxon>Eukaryota</taxon>
        <taxon>Metazoa</taxon>
        <taxon>Chordata</taxon>
        <taxon>Craniata</taxon>
        <taxon>Vertebrata</taxon>
        <taxon>Euteleostomi</taxon>
        <taxon>Mammalia</taxon>
        <taxon>Eutheria</taxon>
        <taxon>Euarchontoglires</taxon>
        <taxon>Primates</taxon>
        <taxon>Haplorrhini</taxon>
        <taxon>Catarrhini</taxon>
        <taxon>Hominidae</taxon>
        <taxon>Homo</taxon>
    </lineage>
</organism>
<proteinExistence type="evidence at protein level"/>
<feature type="initiator methionine" description="Removed" evidence="14">
    <location>
        <position position="1"/>
    </location>
</feature>
<feature type="chain" id="PRO_0000280070" description="U2 snRNP-associated SURP motif-containing protein">
    <location>
        <begin position="2"/>
        <end position="1029"/>
    </location>
</feature>
<feature type="domain" description="RRM" evidence="2">
    <location>
        <begin position="274"/>
        <end position="355"/>
    </location>
</feature>
<feature type="repeat" description="SURP motif">
    <location>
        <begin position="430"/>
        <end position="473"/>
    </location>
</feature>
<feature type="domain" description="CID" evidence="3">
    <location>
        <begin position="534"/>
        <end position="679"/>
    </location>
</feature>
<feature type="region of interest" description="Disordered" evidence="4">
    <location>
        <begin position="1"/>
        <end position="111"/>
    </location>
</feature>
<feature type="region of interest" description="Disordered" evidence="4">
    <location>
        <begin position="141"/>
        <end position="274"/>
    </location>
</feature>
<feature type="region of interest" description="Disordered" evidence="4">
    <location>
        <begin position="778"/>
        <end position="841"/>
    </location>
</feature>
<feature type="region of interest" description="Disordered" evidence="4">
    <location>
        <begin position="855"/>
        <end position="1029"/>
    </location>
</feature>
<feature type="coiled-coil region" evidence="1">
    <location>
        <begin position="92"/>
        <end position="121"/>
    </location>
</feature>
<feature type="coiled-coil region" evidence="1">
    <location>
        <begin position="192"/>
        <end position="232"/>
    </location>
</feature>
<feature type="coiled-coil region" evidence="1">
    <location>
        <begin position="837"/>
        <end position="915"/>
    </location>
</feature>
<feature type="compositionally biased region" description="Polar residues" evidence="4">
    <location>
        <begin position="7"/>
        <end position="16"/>
    </location>
</feature>
<feature type="compositionally biased region" description="Basic residues" evidence="4">
    <location>
        <begin position="45"/>
        <end position="54"/>
    </location>
</feature>
<feature type="compositionally biased region" description="Basic and acidic residues" evidence="4">
    <location>
        <begin position="55"/>
        <end position="64"/>
    </location>
</feature>
<feature type="compositionally biased region" description="Basic and acidic residues" evidence="4">
    <location>
        <begin position="97"/>
        <end position="111"/>
    </location>
</feature>
<feature type="compositionally biased region" description="Basic and acidic residues" evidence="4">
    <location>
        <begin position="144"/>
        <end position="155"/>
    </location>
</feature>
<feature type="compositionally biased region" description="Polar residues" evidence="4">
    <location>
        <begin position="169"/>
        <end position="178"/>
    </location>
</feature>
<feature type="compositionally biased region" description="Basic and acidic residues" evidence="4">
    <location>
        <begin position="186"/>
        <end position="222"/>
    </location>
</feature>
<feature type="compositionally biased region" description="Basic and acidic residues" evidence="4">
    <location>
        <begin position="239"/>
        <end position="249"/>
    </location>
</feature>
<feature type="compositionally biased region" description="Acidic residues" evidence="4">
    <location>
        <begin position="786"/>
        <end position="806"/>
    </location>
</feature>
<feature type="compositionally biased region" description="Basic and acidic residues" evidence="4">
    <location>
        <begin position="810"/>
        <end position="841"/>
    </location>
</feature>
<feature type="compositionally biased region" description="Basic and acidic residues" evidence="4">
    <location>
        <begin position="874"/>
        <end position="922"/>
    </location>
</feature>
<feature type="compositionally biased region" description="Basic and acidic residues" evidence="4">
    <location>
        <begin position="950"/>
        <end position="980"/>
    </location>
</feature>
<feature type="compositionally biased region" description="Basic residues" evidence="4">
    <location>
        <begin position="991"/>
        <end position="1029"/>
    </location>
</feature>
<feature type="modified residue" description="N-acetylalanine" evidence="14">
    <location>
        <position position="2"/>
    </location>
</feature>
<feature type="modified residue" description="Phosphoserine" evidence="15 16">
    <location>
        <position position="67"/>
    </location>
</feature>
<feature type="modified residue" description="Phosphoserine" evidence="13 15">
    <location>
        <position position="202"/>
    </location>
</feature>
<feature type="modified residue" description="Phosphoserine" evidence="15">
    <location>
        <position position="236"/>
    </location>
</feature>
<feature type="modified residue" description="Phosphoserine" evidence="12 13 15">
    <location>
        <position position="485"/>
    </location>
</feature>
<feature type="modified residue" description="Phosphothreonine" evidence="16">
    <location>
        <position position="719"/>
    </location>
</feature>
<feature type="modified residue" description="N6-acetyllysine; alternate" evidence="10">
    <location>
        <position position="760"/>
    </location>
</feature>
<feature type="modified residue" description="Phosphoserine" evidence="9 11 13">
    <location>
        <position position="788"/>
    </location>
</feature>
<feature type="modified residue" description="Phosphoserine" evidence="9 11">
    <location>
        <position position="800"/>
    </location>
</feature>
<feature type="modified residue" description="Phosphoserine" evidence="8 12 13">
    <location>
        <position position="811"/>
    </location>
</feature>
<feature type="modified residue" description="Phosphothreonine" evidence="12">
    <location>
        <position position="931"/>
    </location>
</feature>
<feature type="modified residue" description="Phosphoserine" evidence="12">
    <location>
        <position position="946"/>
    </location>
</feature>
<feature type="modified residue" description="Phosphoserine" evidence="12">
    <location>
        <position position="948"/>
    </location>
</feature>
<feature type="cross-link" description="Glycyl lysine isopeptide (Lys-Gly) (interchain with G-Cter in SUMO2)" evidence="19">
    <location>
        <position position="80"/>
    </location>
</feature>
<feature type="cross-link" description="Glycyl lysine isopeptide (Lys-Gly) (interchain with G-Cter in SUMO2)" evidence="19">
    <location>
        <position position="145"/>
    </location>
</feature>
<feature type="cross-link" description="Glycyl lysine isopeptide (Lys-Gly) (interchain with G-Cter in SUMO2)" evidence="19">
    <location>
        <position position="168"/>
    </location>
</feature>
<feature type="cross-link" description="Glycyl lysine isopeptide (Lys-Gly) (interchain with G-Cter in SUMO2)" evidence="18 19">
    <location>
        <position position="208"/>
    </location>
</feature>
<feature type="cross-link" description="Glycyl lysine isopeptide (Lys-Gly) (interchain with G-Cter in SUMO2)" evidence="19">
    <location>
        <position position="748"/>
    </location>
</feature>
<feature type="cross-link" description="Glycyl lysine isopeptide (Lys-Gly) (interchain with G-Cter in SUMO2)" evidence="19">
    <location>
        <position position="749"/>
    </location>
</feature>
<feature type="cross-link" description="Glycyl lysine isopeptide (Lys-Gly) (interchain with G-Cter in SUMO2); alternate" evidence="17 19">
    <location>
        <position position="760"/>
    </location>
</feature>
<feature type="cross-link" description="Glycyl lysine isopeptide (Lys-Gly) (interchain with G-Cter in SUMO2)" evidence="19">
    <location>
        <position position="822"/>
    </location>
</feature>
<feature type="cross-link" description="Glycyl lysine isopeptide (Lys-Gly) (interchain with G-Cter in SUMO2)" evidence="19">
    <location>
        <position position="829"/>
    </location>
</feature>
<feature type="cross-link" description="Glycyl lysine isopeptide (Lys-Gly) (interchain with G-Cter in SUMO2)" evidence="19">
    <location>
        <position position="832"/>
    </location>
</feature>
<feature type="splice variant" id="VSP_023522" description="In isoform 3." evidence="6">
    <location>
        <begin position="1"/>
        <end position="409"/>
    </location>
</feature>
<feature type="splice variant" id="VSP_023523" description="In isoform 2." evidence="6">
    <location>
        <position position="256"/>
    </location>
</feature>
<feature type="splice variant" id="VSP_023524" description="In isoform 3." evidence="6">
    <original>KTLSQAIVKVVIPTE</original>
    <variation>MLLCYRHLKTKRILR</variation>
    <location>
        <begin position="410"/>
        <end position="424"/>
    </location>
</feature>